<evidence type="ECO:0000255" key="1">
    <source>
        <dbReference type="PROSITE-ProRule" id="PRU00080"/>
    </source>
</evidence>
<reference key="1">
    <citation type="journal article" date="2000" name="Nature">
        <title>Sequence and analysis of chromosome 1 of the plant Arabidopsis thaliana.</title>
        <authorList>
            <person name="Theologis A."/>
            <person name="Ecker J.R."/>
            <person name="Palm C.J."/>
            <person name="Federspiel N.A."/>
            <person name="Kaul S."/>
            <person name="White O."/>
            <person name="Alonso J."/>
            <person name="Altafi H."/>
            <person name="Araujo R."/>
            <person name="Bowman C.L."/>
            <person name="Brooks S.Y."/>
            <person name="Buehler E."/>
            <person name="Chan A."/>
            <person name="Chao Q."/>
            <person name="Chen H."/>
            <person name="Cheuk R.F."/>
            <person name="Chin C.W."/>
            <person name="Chung M.K."/>
            <person name="Conn L."/>
            <person name="Conway A.B."/>
            <person name="Conway A.R."/>
            <person name="Creasy T.H."/>
            <person name="Dewar K."/>
            <person name="Dunn P."/>
            <person name="Etgu P."/>
            <person name="Feldblyum T.V."/>
            <person name="Feng J.-D."/>
            <person name="Fong B."/>
            <person name="Fujii C.Y."/>
            <person name="Gill J.E."/>
            <person name="Goldsmith A.D."/>
            <person name="Haas B."/>
            <person name="Hansen N.F."/>
            <person name="Hughes B."/>
            <person name="Huizar L."/>
            <person name="Hunter J.L."/>
            <person name="Jenkins J."/>
            <person name="Johnson-Hopson C."/>
            <person name="Khan S."/>
            <person name="Khaykin E."/>
            <person name="Kim C.J."/>
            <person name="Koo H.L."/>
            <person name="Kremenetskaia I."/>
            <person name="Kurtz D.B."/>
            <person name="Kwan A."/>
            <person name="Lam B."/>
            <person name="Langin-Hooper S."/>
            <person name="Lee A."/>
            <person name="Lee J.M."/>
            <person name="Lenz C.A."/>
            <person name="Li J.H."/>
            <person name="Li Y.-P."/>
            <person name="Lin X."/>
            <person name="Liu S.X."/>
            <person name="Liu Z.A."/>
            <person name="Luros J.S."/>
            <person name="Maiti R."/>
            <person name="Marziali A."/>
            <person name="Militscher J."/>
            <person name="Miranda M."/>
            <person name="Nguyen M."/>
            <person name="Nierman W.C."/>
            <person name="Osborne B.I."/>
            <person name="Pai G."/>
            <person name="Peterson J."/>
            <person name="Pham P.K."/>
            <person name="Rizzo M."/>
            <person name="Rooney T."/>
            <person name="Rowley D."/>
            <person name="Sakano H."/>
            <person name="Salzberg S.L."/>
            <person name="Schwartz J.R."/>
            <person name="Shinn P."/>
            <person name="Southwick A.M."/>
            <person name="Sun H."/>
            <person name="Tallon L.J."/>
            <person name="Tambunga G."/>
            <person name="Toriumi M.J."/>
            <person name="Town C.D."/>
            <person name="Utterback T."/>
            <person name="Van Aken S."/>
            <person name="Vaysberg M."/>
            <person name="Vysotskaia V.S."/>
            <person name="Walker M."/>
            <person name="Wu D."/>
            <person name="Yu G."/>
            <person name="Fraser C.M."/>
            <person name="Venter J.C."/>
            <person name="Davis R.W."/>
        </authorList>
    </citation>
    <scope>NUCLEOTIDE SEQUENCE [LARGE SCALE GENOMIC DNA]</scope>
    <source>
        <strain>cv. Columbia</strain>
    </source>
</reference>
<reference key="2">
    <citation type="journal article" date="2017" name="Plant J.">
        <title>Araport11: a complete reannotation of the Arabidopsis thaliana reference genome.</title>
        <authorList>
            <person name="Cheng C.Y."/>
            <person name="Krishnakumar V."/>
            <person name="Chan A.P."/>
            <person name="Thibaud-Nissen F."/>
            <person name="Schobel S."/>
            <person name="Town C.D."/>
        </authorList>
    </citation>
    <scope>GENOME REANNOTATION</scope>
    <source>
        <strain>cv. Columbia</strain>
    </source>
</reference>
<organism>
    <name type="scientific">Arabidopsis thaliana</name>
    <name type="common">Mouse-ear cress</name>
    <dbReference type="NCBI Taxonomy" id="3702"/>
    <lineage>
        <taxon>Eukaryota</taxon>
        <taxon>Viridiplantae</taxon>
        <taxon>Streptophyta</taxon>
        <taxon>Embryophyta</taxon>
        <taxon>Tracheophyta</taxon>
        <taxon>Spermatophyta</taxon>
        <taxon>Magnoliopsida</taxon>
        <taxon>eudicotyledons</taxon>
        <taxon>Gunneridae</taxon>
        <taxon>Pentapetalae</taxon>
        <taxon>rosids</taxon>
        <taxon>malvids</taxon>
        <taxon>Brassicales</taxon>
        <taxon>Brassicaceae</taxon>
        <taxon>Camelineae</taxon>
        <taxon>Arabidopsis</taxon>
    </lineage>
</organism>
<feature type="chain" id="PRO_0000283354" description="F-box protein At1g70360">
    <location>
        <begin position="1"/>
        <end position="174"/>
    </location>
</feature>
<feature type="domain" description="F-box" evidence="1">
    <location>
        <begin position="136"/>
        <end position="174"/>
    </location>
</feature>
<protein>
    <recommendedName>
        <fullName>F-box protein At1g70360</fullName>
    </recommendedName>
</protein>
<proteinExistence type="evidence at transcript level"/>
<dbReference type="EMBL" id="AC003671">
    <property type="protein sequence ID" value="AAC18805.1"/>
    <property type="molecule type" value="Genomic_DNA"/>
</dbReference>
<dbReference type="EMBL" id="CP002684">
    <property type="status" value="NOT_ANNOTATED_CDS"/>
    <property type="molecule type" value="Genomic_DNA"/>
</dbReference>
<dbReference type="PIR" id="T01486">
    <property type="entry name" value="T01486"/>
</dbReference>
<dbReference type="SMR" id="O64600"/>
<dbReference type="FunCoup" id="O64600">
    <property type="interactions" value="1"/>
</dbReference>
<dbReference type="PaxDb" id="3702-AT1G70360.1"/>
<dbReference type="Araport" id="AT1G70360"/>
<dbReference type="TAIR" id="AT1G70360"/>
<dbReference type="eggNOG" id="ENOG502QTNJ">
    <property type="taxonomic scope" value="Eukaryota"/>
</dbReference>
<dbReference type="HOGENOM" id="CLU_1449554_0_0_1"/>
<dbReference type="InParanoid" id="O64600"/>
<dbReference type="PhylomeDB" id="O64600"/>
<dbReference type="PRO" id="PR:O64600"/>
<dbReference type="Proteomes" id="UP000006548">
    <property type="component" value="Chromosome 1"/>
</dbReference>
<dbReference type="ExpressionAtlas" id="O64600">
    <property type="expression patterns" value="baseline and differential"/>
</dbReference>
<dbReference type="Gene3D" id="3.40.1000.30">
    <property type="match status" value="1"/>
</dbReference>
<dbReference type="InterPro" id="IPR036047">
    <property type="entry name" value="F-box-like_dom_sf"/>
</dbReference>
<dbReference type="InterPro" id="IPR001810">
    <property type="entry name" value="F-box_dom"/>
</dbReference>
<dbReference type="PANTHER" id="PTHR47602">
    <property type="entry name" value="F-BOX PROTEIN SKIP22"/>
    <property type="match status" value="1"/>
</dbReference>
<dbReference type="PANTHER" id="PTHR47602:SF2">
    <property type="entry name" value="F-BOX PROTEIN SKIP22"/>
    <property type="match status" value="1"/>
</dbReference>
<dbReference type="Pfam" id="PF00646">
    <property type="entry name" value="F-box"/>
    <property type="match status" value="1"/>
</dbReference>
<dbReference type="SUPFAM" id="SSF81383">
    <property type="entry name" value="F-box domain"/>
    <property type="match status" value="1"/>
</dbReference>
<dbReference type="PROSITE" id="PS50181">
    <property type="entry name" value="FBOX"/>
    <property type="match status" value="1"/>
</dbReference>
<accession>O64600</accession>
<keyword id="KW-1185">Reference proteome</keyword>
<gene>
    <name type="ordered locus">At1g70360</name>
    <name type="ORF">F17O7.10</name>
</gene>
<sequence length="174" mass="19420">MEESGDTCELTIVIMTVHAVMLESGFVLFDPDSSMRFSFSKKTLVSLNYTLPSVKGIVGLNFEKEAIVGSFVRVVSIDKRSYVHIVDLLMETLKSDEEEDTLSIDCKVLVWWRMIKDGIVTPLLVDLCYKTGLELPPCFISLPRELKHKILESLPGVDIGTLACVSSELRDMAS</sequence>
<name>FB81_ARATH</name>